<dbReference type="EMBL" id="CM001217">
    <property type="protein sequence ID" value="AES60733.1"/>
    <property type="molecule type" value="Genomic_DNA"/>
</dbReference>
<dbReference type="RefSeq" id="XP_003590482.1">
    <property type="nucleotide sequence ID" value="XM_003590434.2"/>
</dbReference>
<dbReference type="STRING" id="3880.G7IBJ4"/>
<dbReference type="PaxDb" id="3880-AES60733"/>
<dbReference type="GeneID" id="11433273"/>
<dbReference type="KEGG" id="mtr:11433273"/>
<dbReference type="eggNOG" id="KOG0498">
    <property type="taxonomic scope" value="Eukaryota"/>
</dbReference>
<dbReference type="HOGENOM" id="CLU_013069_3_0_1"/>
<dbReference type="OMA" id="INIWNKC"/>
<dbReference type="OrthoDB" id="421226at2759"/>
<dbReference type="Proteomes" id="UP000002051">
    <property type="component" value="Chromosome 1"/>
</dbReference>
<dbReference type="GO" id="GO:0031965">
    <property type="term" value="C:nuclear membrane"/>
    <property type="evidence" value="ECO:0000314"/>
    <property type="project" value="UniProtKB"/>
</dbReference>
<dbReference type="GO" id="GO:0005262">
    <property type="term" value="F:calcium channel activity"/>
    <property type="evidence" value="ECO:0000314"/>
    <property type="project" value="UniProtKB"/>
</dbReference>
<dbReference type="GO" id="GO:0044325">
    <property type="term" value="F:transmembrane transporter binding"/>
    <property type="evidence" value="ECO:0000353"/>
    <property type="project" value="UniProtKB"/>
</dbReference>
<dbReference type="GO" id="GO:0005249">
    <property type="term" value="F:voltage-gated potassium channel activity"/>
    <property type="evidence" value="ECO:0007669"/>
    <property type="project" value="InterPro"/>
</dbReference>
<dbReference type="GO" id="GO:0036377">
    <property type="term" value="P:arbuscular mycorrhizal association"/>
    <property type="evidence" value="ECO:0000315"/>
    <property type="project" value="UniProtKB"/>
</dbReference>
<dbReference type="GO" id="GO:0009877">
    <property type="term" value="P:nodulation"/>
    <property type="evidence" value="ECO:0000315"/>
    <property type="project" value="UniProtKB"/>
</dbReference>
<dbReference type="CDD" id="cd00038">
    <property type="entry name" value="CAP_ED"/>
    <property type="match status" value="1"/>
</dbReference>
<dbReference type="FunFam" id="2.60.120.10:FF:000024">
    <property type="entry name" value="Cyclic nucleotide-gated ion channel 1"/>
    <property type="match status" value="1"/>
</dbReference>
<dbReference type="Gene3D" id="1.10.287.70">
    <property type="match status" value="1"/>
</dbReference>
<dbReference type="Gene3D" id="1.10.287.630">
    <property type="entry name" value="Helix hairpin bin"/>
    <property type="match status" value="1"/>
</dbReference>
<dbReference type="Gene3D" id="2.60.120.10">
    <property type="entry name" value="Jelly Rolls"/>
    <property type="match status" value="1"/>
</dbReference>
<dbReference type="InterPro" id="IPR000595">
    <property type="entry name" value="cNMP-bd_dom"/>
</dbReference>
<dbReference type="InterPro" id="IPR018490">
    <property type="entry name" value="cNMP-bd_dom_sf"/>
</dbReference>
<dbReference type="InterPro" id="IPR005821">
    <property type="entry name" value="Ion_trans_dom"/>
</dbReference>
<dbReference type="InterPro" id="IPR003938">
    <property type="entry name" value="K_chnl_volt-dep_EAG/ELK/ERG"/>
</dbReference>
<dbReference type="InterPro" id="IPR014710">
    <property type="entry name" value="RmlC-like_jellyroll"/>
</dbReference>
<dbReference type="PANTHER" id="PTHR45651">
    <property type="entry name" value="CYCLIC NUCLEOTIDE-GATED ION CHANNEL 15-RELATED-RELATED"/>
    <property type="match status" value="1"/>
</dbReference>
<dbReference type="PANTHER" id="PTHR45651:SF16">
    <property type="entry name" value="PROTEIN CNGC15A"/>
    <property type="match status" value="1"/>
</dbReference>
<dbReference type="Pfam" id="PF00027">
    <property type="entry name" value="cNMP_binding"/>
    <property type="match status" value="1"/>
</dbReference>
<dbReference type="Pfam" id="PF00520">
    <property type="entry name" value="Ion_trans"/>
    <property type="match status" value="1"/>
</dbReference>
<dbReference type="PRINTS" id="PR01463">
    <property type="entry name" value="EAGCHANLFMLY"/>
</dbReference>
<dbReference type="SMART" id="SM00100">
    <property type="entry name" value="cNMP"/>
    <property type="match status" value="1"/>
</dbReference>
<dbReference type="SUPFAM" id="SSF51206">
    <property type="entry name" value="cAMP-binding domain-like"/>
    <property type="match status" value="1"/>
</dbReference>
<dbReference type="SUPFAM" id="SSF81324">
    <property type="entry name" value="Voltage-gated potassium channels"/>
    <property type="match status" value="1"/>
</dbReference>
<dbReference type="PROSITE" id="PS50042">
    <property type="entry name" value="CNMP_BINDING_3"/>
    <property type="match status" value="1"/>
</dbReference>
<keyword id="KW-0407">Ion channel</keyword>
<keyword id="KW-0406">Ion transport</keyword>
<keyword id="KW-1071">Ligand-gated ion channel</keyword>
<keyword id="KW-0472">Membrane</keyword>
<keyword id="KW-0539">Nucleus</keyword>
<keyword id="KW-1185">Reference proteome</keyword>
<keyword id="KW-0812">Transmembrane</keyword>
<keyword id="KW-1133">Transmembrane helix</keyword>
<keyword id="KW-0813">Transport</keyword>
<protein>
    <recommendedName>
        <fullName evidence="4">Protein CNGC15a</fullName>
    </recommendedName>
    <alternativeName>
        <fullName evidence="4">Cyclic nucleotide-gated ion channel protein 15 a</fullName>
    </alternativeName>
</protein>
<organism evidence="6">
    <name type="scientific">Medicago truncatula</name>
    <name type="common">Barrel medic</name>
    <name type="synonym">Medicago tribuloides</name>
    <dbReference type="NCBI Taxonomy" id="3880"/>
    <lineage>
        <taxon>Eukaryota</taxon>
        <taxon>Viridiplantae</taxon>
        <taxon>Streptophyta</taxon>
        <taxon>Embryophyta</taxon>
        <taxon>Tracheophyta</taxon>
        <taxon>Spermatophyta</taxon>
        <taxon>Magnoliopsida</taxon>
        <taxon>eudicotyledons</taxon>
        <taxon>Gunneridae</taxon>
        <taxon>Pentapetalae</taxon>
        <taxon>rosids</taxon>
        <taxon>fabids</taxon>
        <taxon>Fabales</taxon>
        <taxon>Fabaceae</taxon>
        <taxon>Papilionoideae</taxon>
        <taxon>50 kb inversion clade</taxon>
        <taxon>NPAAA clade</taxon>
        <taxon>Hologalegina</taxon>
        <taxon>IRL clade</taxon>
        <taxon>Trifolieae</taxon>
        <taxon>Medicago</taxon>
    </lineage>
</organism>
<gene>
    <name evidence="4" type="primary">CNGC15A</name>
    <name type="ordered locus">MTR_1g064240</name>
</gene>
<reference key="1">
    <citation type="journal article" date="2011" name="Nature">
        <title>The Medicago genome provides insight into the evolution of rhizobial symbioses.</title>
        <authorList>
            <person name="Young N.D."/>
            <person name="Debelle F."/>
            <person name="Oldroyd G.E.D."/>
            <person name="Geurts R."/>
            <person name="Cannon S.B."/>
            <person name="Udvardi M.K."/>
            <person name="Benedito V.A."/>
            <person name="Mayer K.F.X."/>
            <person name="Gouzy J."/>
            <person name="Schoof H."/>
            <person name="Van de Peer Y."/>
            <person name="Proost S."/>
            <person name="Cook D.R."/>
            <person name="Meyers B.C."/>
            <person name="Spannagl M."/>
            <person name="Cheung F."/>
            <person name="De Mita S."/>
            <person name="Krishnakumar V."/>
            <person name="Gundlach H."/>
            <person name="Zhou S."/>
            <person name="Mudge J."/>
            <person name="Bharti A.K."/>
            <person name="Murray J.D."/>
            <person name="Naoumkina M.A."/>
            <person name="Rosen B."/>
            <person name="Silverstein K.A.T."/>
            <person name="Tang H."/>
            <person name="Rombauts S."/>
            <person name="Zhao P.X."/>
            <person name="Zhou P."/>
            <person name="Barbe V."/>
            <person name="Bardou P."/>
            <person name="Bechner M."/>
            <person name="Bellec A."/>
            <person name="Berger A."/>
            <person name="Berges H."/>
            <person name="Bidwell S."/>
            <person name="Bisseling T."/>
            <person name="Choisne N."/>
            <person name="Couloux A."/>
            <person name="Denny R."/>
            <person name="Deshpande S."/>
            <person name="Dai X."/>
            <person name="Doyle J.J."/>
            <person name="Dudez A.-M."/>
            <person name="Farmer A.D."/>
            <person name="Fouteau S."/>
            <person name="Franken C."/>
            <person name="Gibelin C."/>
            <person name="Gish J."/>
            <person name="Goldstein S."/>
            <person name="Gonzalez A.J."/>
            <person name="Green P.J."/>
            <person name="Hallab A."/>
            <person name="Hartog M."/>
            <person name="Hua A."/>
            <person name="Humphray S.J."/>
            <person name="Jeong D.-H."/>
            <person name="Jing Y."/>
            <person name="Jocker A."/>
            <person name="Kenton S.M."/>
            <person name="Kim D.-J."/>
            <person name="Klee K."/>
            <person name="Lai H."/>
            <person name="Lang C."/>
            <person name="Lin S."/>
            <person name="Macmil S.L."/>
            <person name="Magdelenat G."/>
            <person name="Matthews L."/>
            <person name="McCorrison J."/>
            <person name="Monaghan E.L."/>
            <person name="Mun J.-H."/>
            <person name="Najar F.Z."/>
            <person name="Nicholson C."/>
            <person name="Noirot C."/>
            <person name="O'Bleness M."/>
            <person name="Paule C.R."/>
            <person name="Poulain J."/>
            <person name="Prion F."/>
            <person name="Qin B."/>
            <person name="Qu C."/>
            <person name="Retzel E.F."/>
            <person name="Riddle C."/>
            <person name="Sallet E."/>
            <person name="Samain S."/>
            <person name="Samson N."/>
            <person name="Sanders I."/>
            <person name="Saurat O."/>
            <person name="Scarpelli C."/>
            <person name="Schiex T."/>
            <person name="Segurens B."/>
            <person name="Severin A.J."/>
            <person name="Sherrier D.J."/>
            <person name="Shi R."/>
            <person name="Sims S."/>
            <person name="Singer S.R."/>
            <person name="Sinharoy S."/>
            <person name="Sterck L."/>
            <person name="Viollet A."/>
            <person name="Wang B.-B."/>
            <person name="Wang K."/>
            <person name="Wang M."/>
            <person name="Wang X."/>
            <person name="Warfsmann J."/>
            <person name="Weissenbach J."/>
            <person name="White D.D."/>
            <person name="White J.D."/>
            <person name="Wiley G.B."/>
            <person name="Wincker P."/>
            <person name="Xing Y."/>
            <person name="Yang L."/>
            <person name="Yao Z."/>
            <person name="Ying F."/>
            <person name="Zhai J."/>
            <person name="Zhou L."/>
            <person name="Zuber A."/>
            <person name="Denarie J."/>
            <person name="Dixon R.A."/>
            <person name="May G.D."/>
            <person name="Schwartz D.C."/>
            <person name="Rogers J."/>
            <person name="Quetier F."/>
            <person name="Town C.D."/>
            <person name="Roe B.A."/>
        </authorList>
    </citation>
    <scope>NUCLEOTIDE SEQUENCE [LARGE SCALE GENOMIC DNA]</scope>
    <source>
        <strain>cv. Jemalong A17</strain>
    </source>
</reference>
<reference key="2">
    <citation type="journal article" date="2014" name="BMC Genomics">
        <title>An improved genome release (version Mt4.0) for the model legume Medicago truncatula.</title>
        <authorList>
            <person name="Tang H."/>
            <person name="Krishnakumar V."/>
            <person name="Bidwell S."/>
            <person name="Rosen B."/>
            <person name="Chan A."/>
            <person name="Zhou S."/>
            <person name="Gentzbittel L."/>
            <person name="Childs K.L."/>
            <person name="Yandell M."/>
            <person name="Gundlach H."/>
            <person name="Mayer K.F."/>
            <person name="Schwartz D.C."/>
            <person name="Town C.D."/>
        </authorList>
    </citation>
    <scope>GENOME REANNOTATION</scope>
    <source>
        <strain>cv. Jemalong A17</strain>
    </source>
</reference>
<reference key="3">
    <citation type="journal article" date="2016" name="Science">
        <title>Nuclear-localized cyclic nucleotide-gated channels mediate symbiotic calcium oscillations.</title>
        <authorList>
            <person name="Charpentier M."/>
            <person name="Sun J."/>
            <person name="Martins T.V."/>
            <person name="Radhakrishnan G.V."/>
            <person name="Findlay K."/>
            <person name="Soumpourou E."/>
            <person name="Thouin J."/>
            <person name="Very A.A."/>
            <person name="Sanders D."/>
            <person name="Morris R.J."/>
            <person name="Oldroyd G.E."/>
        </authorList>
    </citation>
    <scope>FUNCTION</scope>
    <scope>TISSUE SPECIFICITY</scope>
    <scope>SUBCELLULAR LOCATION</scope>
    <scope>INTERACTION WITH DMI1</scope>
    <scope>GENE FAMILY</scope>
    <scope>NOMENCLATURE</scope>
</reference>
<name>CN15A_MEDTR</name>
<sequence>MASVISRAVRFHDDLEKEKLQEGEESHMEMRAYEMSSEYKHGKDAINKPSSNGRGLSRVFSEDYDAGEILVFDPRGPRINLWNKIFLAACLISLFVDPLFFYLPVAKKEKCIDMSIGLEVSLTIIRTFVDAFYIIHIYIRFQTAYIAPSSRVSGRGELIIDSSKIASNYMKKELWSDLVAALPLPQVLIWAVIPNIKGSEMIASRHVVRLVSIFQYLLRLYLIYPLSSKITKASGVMMEKAWAGAAYYLTLYMLASHVLGSTWYLLSIERQDECWKKACTLQYPHCQYHYLDCQSLSDPNRNAWLKSSNLSGLCDQNSHFFQFGIFDDAVTLEITSSNFLTKYYYCLWWGLRNLSSSGENLLTSTHVAEINFAVIVAILGLVLFALLIGNMQTYLQSTTIRLEEWRIRRTDTERWMHHRQLPHYLKENVRRHDQFRWVATRGVDEEAILRDLPVDLRRDIKRHLCLNLVRQVPLFDQMDDRMLDAICERLKPTLCTPGTCIVREGDPVDEMLFIVRGRLDSCTTNGGRTGFFNTCRIGSGDFCGEELLPWALDPRPTAVLPSSTRTVRAITEVEAFALIAEDLKFVAAQFRRLHSKQLRQTFRFYSHQWRTWAACFIQAAWFRYKRMKETNEVKEKENLMMMSNVKYYGNDDSQYFSAPLQVPKGSSYSMYSGKLVGSLRRGRSMRYGSELDMLGTLRKPIEPDFNDDGD</sequence>
<feature type="chain" id="PRO_0000437092" description="Protein CNGC15a">
    <location>
        <begin position="1"/>
        <end position="710"/>
    </location>
</feature>
<feature type="transmembrane region" description="Helical" evidence="1">
    <location>
        <begin position="85"/>
        <end position="105"/>
    </location>
</feature>
<feature type="transmembrane region" description="Helical" evidence="1">
    <location>
        <begin position="115"/>
        <end position="135"/>
    </location>
</feature>
<feature type="transmembrane region" description="Helical" evidence="1">
    <location>
        <begin position="174"/>
        <end position="194"/>
    </location>
</feature>
<feature type="transmembrane region" description="Helical" evidence="1">
    <location>
        <begin position="207"/>
        <end position="226"/>
    </location>
</feature>
<feature type="transmembrane region" description="Helical" evidence="1">
    <location>
        <begin position="248"/>
        <end position="268"/>
    </location>
</feature>
<feature type="transmembrane region" description="Helical" evidence="1">
    <location>
        <begin position="368"/>
        <end position="388"/>
    </location>
</feature>
<feature type="binding site" evidence="2">
    <location>
        <begin position="474"/>
        <end position="559"/>
    </location>
    <ligand>
        <name>a nucleoside 3',5'-cyclic phosphate</name>
        <dbReference type="ChEBI" id="CHEBI:58464"/>
    </ligand>
</feature>
<evidence type="ECO:0000255" key="1"/>
<evidence type="ECO:0000255" key="2">
    <source>
        <dbReference type="PROSITE-ProRule" id="PRU00060"/>
    </source>
</evidence>
<evidence type="ECO:0000269" key="3">
    <source>
    </source>
</evidence>
<evidence type="ECO:0000303" key="4">
    <source>
    </source>
</evidence>
<evidence type="ECO:0000305" key="5"/>
<evidence type="ECO:0000312" key="6">
    <source>
        <dbReference type="Proteomes" id="UP000002051"/>
    </source>
</evidence>
<proteinExistence type="evidence at protein level"/>
<comment type="function">
    <text evidence="3">Cyclic nucleotide-gated channel involved in the establishment of both rhizobial and mycorrhizal associations (PubMed:27230377). Required for full activation of nuclear-localized Ca(2+) oscillations by Nod and Myc factors (PubMed:27230377). Simultaneous activation of the K(+)-permeable channel DMI1 and the Ca(2+) channel CNGC15 can give rise to sustained Ca(2+) oscillations (PubMed:27230377). May function during fertilization in both female and male gametophytic Ca(2+) signaling (PubMed:27230377).</text>
</comment>
<comment type="subunit">
    <text evidence="3">Interacts (via N-terminus) with DMI1 (via c-terminus). The Nod factor has no effect on this interaction, implying that the complex is maintained after activation.</text>
</comment>
<comment type="subcellular location">
    <subcellularLocation>
        <location evidence="3">Nucleus membrane</location>
        <topology evidence="1">Multi-pass membrane protein</topology>
    </subcellularLocation>
</comment>
<comment type="tissue specificity">
    <text evidence="3">Expressed in roots, stems, leaves, flowers and pods.</text>
</comment>
<comment type="similarity">
    <text evidence="5">Belongs to the cyclic nucleotide-gated cation channel (TC 1.A.1.5) family.</text>
</comment>
<accession>G7IBJ4</accession>